<name>CUTB_SULAC</name>
<feature type="chain" id="PRO_0000424272" description="Glyceraldehyde dehydrogenase medium chain">
    <location>
        <begin position="1"/>
        <end position="281"/>
    </location>
</feature>
<feature type="domain" description="FAD-binding PCMH-type" evidence="2">
    <location>
        <begin position="1"/>
        <end position="176"/>
    </location>
</feature>
<feature type="binding site" evidence="1">
    <location>
        <begin position="31"/>
        <end position="35"/>
    </location>
    <ligand>
        <name>FAD</name>
        <dbReference type="ChEBI" id="CHEBI:57692"/>
    </ligand>
</feature>
<feature type="binding site" evidence="1">
    <location>
        <begin position="110"/>
        <end position="114"/>
    </location>
    <ligand>
        <name>FAD</name>
        <dbReference type="ChEBI" id="CHEBI:57692"/>
    </ligand>
</feature>
<accession>Q4J6M6</accession>
<comment type="function">
    <text evidence="3">Component of the glyceraldehyde dehydrogenase which is involved the nonphosphorylated Entner-Doudoroff pathway. Catalyzes the oxidation of D-glyceraldehyde to yield glycerate. When the artificial electron acceptor 2,6-dichlorophenol-indophenol (Cl2Ind) is used, the enzyme shows a broad substrate range (glyceraldehyde-3-phosphate, formaldehyde, acetaldehyde, propionaldehyde and isobutyraldehyde), but is most active with D-glyceraldehyde. It is not known which acceptor is utilized in vivo.</text>
</comment>
<comment type="catalytic activity">
    <reaction evidence="3">
        <text>D-glyceraldehyde + A + H2O = (R)-glycerate + AH2 + H(+)</text>
        <dbReference type="Rhea" id="RHEA:36047"/>
        <dbReference type="ChEBI" id="CHEBI:13193"/>
        <dbReference type="ChEBI" id="CHEBI:15377"/>
        <dbReference type="ChEBI" id="CHEBI:15378"/>
        <dbReference type="ChEBI" id="CHEBI:16659"/>
        <dbReference type="ChEBI" id="CHEBI:17378"/>
        <dbReference type="ChEBI" id="CHEBI:17499"/>
        <dbReference type="EC" id="1.2.99.8"/>
    </reaction>
</comment>
<comment type="cofactor">
    <cofactor evidence="3">
        <name>FAD</name>
        <dbReference type="ChEBI" id="CHEBI:57692"/>
    </cofactor>
    <text evidence="3">Binds 1 FAD per subunit.</text>
</comment>
<comment type="biophysicochemical properties">
    <kinetics>
        <KM evidence="3">30 uM for propionaldehyde (at 80 degrees Celsius and pH 6.7)</KM>
        <KM evidence="3">90 uM for D,L-glyceraldehyde (at 80 degrees Celsius and pH 6.7)</KM>
    </kinetics>
    <phDependence>
        <text evidence="3">Optimum pH is 6.7. At pH 6.7, glyceraldehyde is the predominant substrate, however at pH 7.5 the dehydrogenase exhibits activity preferentially towards the aliphatic aldehydes such as formaldehyde, acetaldehyde and propionaldehyde.</text>
    </phDependence>
</comment>
<comment type="subunit">
    <text evidence="3">Heterotrimer composed of a large chain (CutA), a medium chain (CutB) and a small chain (CutC).</text>
</comment>
<comment type="subcellular location">
    <subcellularLocation>
        <location evidence="3">Cytoplasm</location>
    </subcellularLocation>
</comment>
<keyword id="KW-0963">Cytoplasm</keyword>
<keyword id="KW-0903">Direct protein sequencing</keyword>
<keyword id="KW-0274">FAD</keyword>
<keyword id="KW-0285">Flavoprotein</keyword>
<keyword id="KW-0560">Oxidoreductase</keyword>
<keyword id="KW-1185">Reference proteome</keyword>
<evidence type="ECO:0000250" key="1"/>
<evidence type="ECO:0000255" key="2">
    <source>
        <dbReference type="PROSITE-ProRule" id="PRU00718"/>
    </source>
</evidence>
<evidence type="ECO:0000269" key="3">
    <source>
    </source>
</evidence>
<gene>
    <name type="primary">cutB</name>
    <name type="ordered locus">Saci_2269</name>
</gene>
<organism>
    <name type="scientific">Sulfolobus acidocaldarius (strain ATCC 33909 / DSM 639 / JCM 8929 / NBRC 15157 / NCIMB 11770)</name>
    <dbReference type="NCBI Taxonomy" id="330779"/>
    <lineage>
        <taxon>Archaea</taxon>
        <taxon>Thermoproteota</taxon>
        <taxon>Thermoprotei</taxon>
        <taxon>Sulfolobales</taxon>
        <taxon>Sulfolobaceae</taxon>
        <taxon>Sulfolobus</taxon>
    </lineage>
</organism>
<dbReference type="EC" id="1.2.99.8"/>
<dbReference type="EMBL" id="CP000077">
    <property type="protein sequence ID" value="AAY81555.1"/>
    <property type="molecule type" value="Genomic_DNA"/>
</dbReference>
<dbReference type="RefSeq" id="WP_011279057.1">
    <property type="nucleotide sequence ID" value="NC_007181.1"/>
</dbReference>
<dbReference type="SMR" id="Q4J6M6"/>
<dbReference type="STRING" id="330779.Saci_2269"/>
<dbReference type="GeneID" id="14552782"/>
<dbReference type="GeneID" id="78440256"/>
<dbReference type="KEGG" id="sai:Saci_2269"/>
<dbReference type="PATRIC" id="fig|330779.12.peg.2278"/>
<dbReference type="eggNOG" id="arCOG01926">
    <property type="taxonomic scope" value="Archaea"/>
</dbReference>
<dbReference type="HOGENOM" id="CLU_058050_3_0_2"/>
<dbReference type="BioCyc" id="MetaCyc:MONOMER-17914"/>
<dbReference type="BRENDA" id="1.2.99.8">
    <property type="organism ID" value="6160"/>
</dbReference>
<dbReference type="Proteomes" id="UP000001018">
    <property type="component" value="Chromosome"/>
</dbReference>
<dbReference type="GO" id="GO:0005737">
    <property type="term" value="C:cytoplasm"/>
    <property type="evidence" value="ECO:0000314"/>
    <property type="project" value="UniProtKB"/>
</dbReference>
<dbReference type="GO" id="GO:0071949">
    <property type="term" value="F:FAD binding"/>
    <property type="evidence" value="ECO:0007669"/>
    <property type="project" value="InterPro"/>
</dbReference>
<dbReference type="GO" id="GO:0050660">
    <property type="term" value="F:flavin adenine dinucleotide binding"/>
    <property type="evidence" value="ECO:0000314"/>
    <property type="project" value="UniProtKB"/>
</dbReference>
<dbReference type="GO" id="GO:0043795">
    <property type="term" value="F:glyceraldehyde oxidoreductase activity"/>
    <property type="evidence" value="ECO:0007669"/>
    <property type="project" value="UniProtKB-EC"/>
</dbReference>
<dbReference type="GO" id="GO:0016903">
    <property type="term" value="F:oxidoreductase activity, acting on the aldehyde or oxo group of donors"/>
    <property type="evidence" value="ECO:0000314"/>
    <property type="project" value="UniProtKB"/>
</dbReference>
<dbReference type="FunFam" id="3.30.465.10:FF:000017">
    <property type="entry name" value="Xanthine dehydrogenase, FAD binding subunit"/>
    <property type="match status" value="1"/>
</dbReference>
<dbReference type="Gene3D" id="3.30.465.10">
    <property type="match status" value="1"/>
</dbReference>
<dbReference type="Gene3D" id="3.30.390.50">
    <property type="entry name" value="CO dehydrogenase flavoprotein, C-terminal domain"/>
    <property type="match status" value="1"/>
</dbReference>
<dbReference type="Gene3D" id="3.30.43.10">
    <property type="entry name" value="Uridine Diphospho-n-acetylenolpyruvylglucosamine Reductase, domain 2"/>
    <property type="match status" value="1"/>
</dbReference>
<dbReference type="InterPro" id="IPR005107">
    <property type="entry name" value="CO_DH_flav_C"/>
</dbReference>
<dbReference type="InterPro" id="IPR036683">
    <property type="entry name" value="CO_DH_flav_C_dom_sf"/>
</dbReference>
<dbReference type="InterPro" id="IPR051312">
    <property type="entry name" value="Diverse_Substr_Oxidored"/>
</dbReference>
<dbReference type="InterPro" id="IPR016166">
    <property type="entry name" value="FAD-bd_PCMH"/>
</dbReference>
<dbReference type="InterPro" id="IPR036318">
    <property type="entry name" value="FAD-bd_PCMH-like_sf"/>
</dbReference>
<dbReference type="InterPro" id="IPR016167">
    <property type="entry name" value="FAD-bd_PCMH_sub1"/>
</dbReference>
<dbReference type="InterPro" id="IPR016169">
    <property type="entry name" value="FAD-bd_PCMH_sub2"/>
</dbReference>
<dbReference type="InterPro" id="IPR053586">
    <property type="entry name" value="Glyceraldehyde_DH_medium"/>
</dbReference>
<dbReference type="InterPro" id="IPR002346">
    <property type="entry name" value="Mopterin_DH_FAD-bd"/>
</dbReference>
<dbReference type="NCBIfam" id="NF041019">
    <property type="entry name" value="glyceraldDH_beta"/>
    <property type="match status" value="1"/>
</dbReference>
<dbReference type="PANTHER" id="PTHR42659">
    <property type="entry name" value="XANTHINE DEHYDROGENASE SUBUNIT C-RELATED"/>
    <property type="match status" value="1"/>
</dbReference>
<dbReference type="PANTHER" id="PTHR42659:SF2">
    <property type="entry name" value="XANTHINE DEHYDROGENASE SUBUNIT C-RELATED"/>
    <property type="match status" value="1"/>
</dbReference>
<dbReference type="Pfam" id="PF03450">
    <property type="entry name" value="CO_deh_flav_C"/>
    <property type="match status" value="1"/>
</dbReference>
<dbReference type="Pfam" id="PF00941">
    <property type="entry name" value="FAD_binding_5"/>
    <property type="match status" value="1"/>
</dbReference>
<dbReference type="SMART" id="SM01092">
    <property type="entry name" value="CO_deh_flav_C"/>
    <property type="match status" value="1"/>
</dbReference>
<dbReference type="SUPFAM" id="SSF55447">
    <property type="entry name" value="CO dehydrogenase flavoprotein C-terminal domain-like"/>
    <property type="match status" value="1"/>
</dbReference>
<dbReference type="SUPFAM" id="SSF56176">
    <property type="entry name" value="FAD-binding/transporter-associated domain-like"/>
    <property type="match status" value="1"/>
</dbReference>
<dbReference type="PROSITE" id="PS51387">
    <property type="entry name" value="FAD_PCMH"/>
    <property type="match status" value="1"/>
</dbReference>
<proteinExistence type="evidence at protein level"/>
<sequence>MYPPEFSYVRAESLQEALKFLEGNDNTRPLAGGQSLIPMLKLRVLSPDYILDINRLNELNYVKTSLNGVSIGALTRYHDILSNDIVKSKVPLMHHATRTIGDMQVRNMGTIGGAISNADPASDMPVVLTALNATIILSSASGSRSVKALDFFKGPFTTDTNKGELVTQIEVPVLDGYKTVYKKVVRRAGDYALASVALAIKLKGNEIEDIKLAYGGVHDKPFRAMEVEKNVIGKKLNDDLVKDIASKVSSQINPPSDHRGSSWYRREVVKVLTMKAFKEVA</sequence>
<protein>
    <recommendedName>
        <fullName>Glyceraldehyde dehydrogenase medium chain</fullName>
        <ecNumber>1.2.99.8</ecNumber>
    </recommendedName>
    <alternativeName>
        <fullName>Glyceraldehyde dehydrogenase subunit B</fullName>
    </alternativeName>
    <alternativeName>
        <fullName>Glyceraldehyde dehydrogenase subunit beta</fullName>
    </alternativeName>
</protein>
<reference key="1">
    <citation type="journal article" date="2005" name="J. Bacteriol.">
        <title>The genome of Sulfolobus acidocaldarius, a model organism of the Crenarchaeota.</title>
        <authorList>
            <person name="Chen L."/>
            <person name="Bruegger K."/>
            <person name="Skovgaard M."/>
            <person name="Redder P."/>
            <person name="She Q."/>
            <person name="Torarinsson E."/>
            <person name="Greve B."/>
            <person name="Awayez M."/>
            <person name="Zibat A."/>
            <person name="Klenk H.-P."/>
            <person name="Garrett R.A."/>
        </authorList>
    </citation>
    <scope>NUCLEOTIDE SEQUENCE [LARGE SCALE GENOMIC DNA]</scope>
    <source>
        <strain>ATCC 33909 / DSM 639 / JCM 8929 / NBRC 15157 / NCIMB 11770</strain>
    </source>
</reference>
<reference key="2">
    <citation type="journal article" date="1999" name="Eur. J. Biochem.">
        <title>The strict molybdate-dependence of glucose-degradation by the thermoacidophile Sulfolobus acidocaldarius reveals the first crenarchaeotic molybdenum containing enzyme--an aldehyde oxidoreductase.</title>
        <authorList>
            <person name="Kardinahl S."/>
            <person name="Schmidt C.L."/>
            <person name="Hansen T."/>
            <person name="Anemuller S."/>
            <person name="Petersen A."/>
            <person name="Schafer G."/>
        </authorList>
    </citation>
    <scope>PROTEIN SEQUENCE OF 1-18</scope>
    <scope>FUNCTION</scope>
    <scope>CATALYTIC ACTIVITY</scope>
    <scope>COFACTOR</scope>
    <scope>SUBCELLULAR LOCATION</scope>
    <scope>BIOPHYSICOCHEMICAL PROPERTIES</scope>
    <scope>SUBSTRATE SPECIFICITY</scope>
    <scope>SUBUNIT</scope>
</reference>